<accession>Q9Z7S1</accession>
<accession>Q9JQH0</accession>
<protein>
    <recommendedName>
        <fullName evidence="1">Large ribosomal subunit protein uL6</fullName>
    </recommendedName>
    <alternativeName>
        <fullName evidence="2">50S ribosomal protein L6</fullName>
    </alternativeName>
</protein>
<gene>
    <name evidence="1" type="primary">rplF</name>
    <name type="synonym">rl6</name>
    <name type="ordered locus">CPn_0633</name>
    <name type="ordered locus">CP_0114</name>
    <name type="ordered locus">CpB0659</name>
</gene>
<evidence type="ECO:0000255" key="1">
    <source>
        <dbReference type="HAMAP-Rule" id="MF_01365"/>
    </source>
</evidence>
<evidence type="ECO:0000305" key="2"/>
<comment type="function">
    <text evidence="1">This protein binds to the 23S rRNA, and is important in its secondary structure. It is located near the subunit interface in the base of the L7/L12 stalk, and near the tRNA binding site of the peptidyltransferase center.</text>
</comment>
<comment type="subunit">
    <text evidence="1">Part of the 50S ribosomal subunit.</text>
</comment>
<comment type="similarity">
    <text evidence="1">Belongs to the universal ribosomal protein uL6 family.</text>
</comment>
<name>RL6_CHLPN</name>
<proteinExistence type="inferred from homology"/>
<dbReference type="EMBL" id="AE001363">
    <property type="protein sequence ID" value="AAD18772.1"/>
    <property type="molecule type" value="Genomic_DNA"/>
</dbReference>
<dbReference type="EMBL" id="AE002161">
    <property type="protein sequence ID" value="AAF37997.1"/>
    <property type="molecule type" value="Genomic_DNA"/>
</dbReference>
<dbReference type="EMBL" id="BA000008">
    <property type="protein sequence ID" value="BAA98840.1"/>
    <property type="molecule type" value="Genomic_DNA"/>
</dbReference>
<dbReference type="EMBL" id="AE009440">
    <property type="protein sequence ID" value="AAP98588.1"/>
    <property type="molecule type" value="Genomic_DNA"/>
</dbReference>
<dbReference type="PIR" id="C72054">
    <property type="entry name" value="C72054"/>
</dbReference>
<dbReference type="PIR" id="F86569">
    <property type="entry name" value="F86569"/>
</dbReference>
<dbReference type="RefSeq" id="NP_224829.1">
    <property type="nucleotide sequence ID" value="NC_000922.1"/>
</dbReference>
<dbReference type="RefSeq" id="WP_010883271.1">
    <property type="nucleotide sequence ID" value="NZ_LN847257.1"/>
</dbReference>
<dbReference type="SMR" id="Q9Z7S1"/>
<dbReference type="STRING" id="406984.CPK_ORF00033"/>
<dbReference type="GeneID" id="45050683"/>
<dbReference type="KEGG" id="cpa:CP_0114"/>
<dbReference type="KEGG" id="cpj:rl6"/>
<dbReference type="KEGG" id="cpn:CPn_0633"/>
<dbReference type="KEGG" id="cpt:CpB0659"/>
<dbReference type="PATRIC" id="fig|115713.3.peg.703"/>
<dbReference type="eggNOG" id="COG0097">
    <property type="taxonomic scope" value="Bacteria"/>
</dbReference>
<dbReference type="HOGENOM" id="CLU_065464_1_2_0"/>
<dbReference type="OrthoDB" id="9805007at2"/>
<dbReference type="Proteomes" id="UP000000583">
    <property type="component" value="Chromosome"/>
</dbReference>
<dbReference type="Proteomes" id="UP000000801">
    <property type="component" value="Chromosome"/>
</dbReference>
<dbReference type="GO" id="GO:0022625">
    <property type="term" value="C:cytosolic large ribosomal subunit"/>
    <property type="evidence" value="ECO:0007669"/>
    <property type="project" value="TreeGrafter"/>
</dbReference>
<dbReference type="GO" id="GO:0019843">
    <property type="term" value="F:rRNA binding"/>
    <property type="evidence" value="ECO:0007669"/>
    <property type="project" value="UniProtKB-UniRule"/>
</dbReference>
<dbReference type="GO" id="GO:0003735">
    <property type="term" value="F:structural constituent of ribosome"/>
    <property type="evidence" value="ECO:0007669"/>
    <property type="project" value="InterPro"/>
</dbReference>
<dbReference type="GO" id="GO:0002181">
    <property type="term" value="P:cytoplasmic translation"/>
    <property type="evidence" value="ECO:0007669"/>
    <property type="project" value="TreeGrafter"/>
</dbReference>
<dbReference type="FunFam" id="3.90.930.12:FF:000001">
    <property type="entry name" value="50S ribosomal protein L6"/>
    <property type="match status" value="1"/>
</dbReference>
<dbReference type="Gene3D" id="3.90.930.12">
    <property type="entry name" value="Ribosomal protein L6, alpha-beta domain"/>
    <property type="match status" value="2"/>
</dbReference>
<dbReference type="HAMAP" id="MF_01365_B">
    <property type="entry name" value="Ribosomal_uL6_B"/>
    <property type="match status" value="1"/>
</dbReference>
<dbReference type="InterPro" id="IPR000702">
    <property type="entry name" value="Ribosomal_uL6-like"/>
</dbReference>
<dbReference type="InterPro" id="IPR036789">
    <property type="entry name" value="Ribosomal_uL6-like_a/b-dom_sf"/>
</dbReference>
<dbReference type="InterPro" id="IPR020040">
    <property type="entry name" value="Ribosomal_uL6_a/b-dom"/>
</dbReference>
<dbReference type="InterPro" id="IPR019906">
    <property type="entry name" value="Ribosomal_uL6_bac-type"/>
</dbReference>
<dbReference type="InterPro" id="IPR002358">
    <property type="entry name" value="Ribosomal_uL6_CS"/>
</dbReference>
<dbReference type="NCBIfam" id="TIGR03654">
    <property type="entry name" value="L6_bact"/>
    <property type="match status" value="1"/>
</dbReference>
<dbReference type="PANTHER" id="PTHR11655">
    <property type="entry name" value="60S/50S RIBOSOMAL PROTEIN L6/L9"/>
    <property type="match status" value="1"/>
</dbReference>
<dbReference type="PANTHER" id="PTHR11655:SF14">
    <property type="entry name" value="LARGE RIBOSOMAL SUBUNIT PROTEIN UL6M"/>
    <property type="match status" value="1"/>
</dbReference>
<dbReference type="Pfam" id="PF00347">
    <property type="entry name" value="Ribosomal_L6"/>
    <property type="match status" value="2"/>
</dbReference>
<dbReference type="PIRSF" id="PIRSF002162">
    <property type="entry name" value="Ribosomal_L6"/>
    <property type="match status" value="1"/>
</dbReference>
<dbReference type="PRINTS" id="PR00059">
    <property type="entry name" value="RIBOSOMALL6"/>
</dbReference>
<dbReference type="SUPFAM" id="SSF56053">
    <property type="entry name" value="Ribosomal protein L6"/>
    <property type="match status" value="2"/>
</dbReference>
<dbReference type="PROSITE" id="PS00525">
    <property type="entry name" value="RIBOSOMAL_L6_1"/>
    <property type="match status" value="1"/>
</dbReference>
<reference key="1">
    <citation type="journal article" date="1999" name="Nat. Genet.">
        <title>Comparative genomes of Chlamydia pneumoniae and C. trachomatis.</title>
        <authorList>
            <person name="Kalman S."/>
            <person name="Mitchell W.P."/>
            <person name="Marathe R."/>
            <person name="Lammel C.J."/>
            <person name="Fan J."/>
            <person name="Hyman R.W."/>
            <person name="Olinger L."/>
            <person name="Grimwood J."/>
            <person name="Davis R.W."/>
            <person name="Stephens R.S."/>
        </authorList>
    </citation>
    <scope>NUCLEOTIDE SEQUENCE [LARGE SCALE GENOMIC DNA]</scope>
    <source>
        <strain>CWL029</strain>
    </source>
</reference>
<reference key="2">
    <citation type="journal article" date="2000" name="Nucleic Acids Res.">
        <title>Genome sequences of Chlamydia trachomatis MoPn and Chlamydia pneumoniae AR39.</title>
        <authorList>
            <person name="Read T.D."/>
            <person name="Brunham R.C."/>
            <person name="Shen C."/>
            <person name="Gill S.R."/>
            <person name="Heidelberg J.F."/>
            <person name="White O."/>
            <person name="Hickey E.K."/>
            <person name="Peterson J.D."/>
            <person name="Utterback T.R."/>
            <person name="Berry K.J."/>
            <person name="Bass S."/>
            <person name="Linher K.D."/>
            <person name="Weidman J.F."/>
            <person name="Khouri H.M."/>
            <person name="Craven B."/>
            <person name="Bowman C."/>
            <person name="Dodson R.J."/>
            <person name="Gwinn M.L."/>
            <person name="Nelson W.C."/>
            <person name="DeBoy R.T."/>
            <person name="Kolonay J.F."/>
            <person name="McClarty G."/>
            <person name="Salzberg S.L."/>
            <person name="Eisen J.A."/>
            <person name="Fraser C.M."/>
        </authorList>
    </citation>
    <scope>NUCLEOTIDE SEQUENCE [LARGE SCALE GENOMIC DNA]</scope>
    <source>
        <strain>AR39</strain>
    </source>
</reference>
<reference key="3">
    <citation type="journal article" date="2000" name="Nucleic Acids Res.">
        <title>Comparison of whole genome sequences of Chlamydia pneumoniae J138 from Japan and CWL029 from USA.</title>
        <authorList>
            <person name="Shirai M."/>
            <person name="Hirakawa H."/>
            <person name="Kimoto M."/>
            <person name="Tabuchi M."/>
            <person name="Kishi F."/>
            <person name="Ouchi K."/>
            <person name="Shiba T."/>
            <person name="Ishii K."/>
            <person name="Hattori M."/>
            <person name="Kuhara S."/>
            <person name="Nakazawa T."/>
        </authorList>
    </citation>
    <scope>NUCLEOTIDE SEQUENCE [LARGE SCALE GENOMIC DNA]</scope>
    <source>
        <strain>J138</strain>
    </source>
</reference>
<reference key="4">
    <citation type="submission" date="2002-05" db="EMBL/GenBank/DDBJ databases">
        <title>The genome sequence of Chlamydia pneumoniae TW183 and comparison with other Chlamydia strains based on whole genome sequence analysis.</title>
        <authorList>
            <person name="Geng M.M."/>
            <person name="Schuhmacher A."/>
            <person name="Muehldorfer I."/>
            <person name="Bensch K.W."/>
            <person name="Schaefer K.P."/>
            <person name="Schneider S."/>
            <person name="Pohl T."/>
            <person name="Essig A."/>
            <person name="Marre R."/>
            <person name="Melchers K."/>
        </authorList>
    </citation>
    <scope>NUCLEOTIDE SEQUENCE [LARGE SCALE GENOMIC DNA]</scope>
    <source>
        <strain>TW-183</strain>
    </source>
</reference>
<feature type="chain" id="PRO_0000131045" description="Large ribosomal subunit protein uL6">
    <location>
        <begin position="1"/>
        <end position="183"/>
    </location>
</feature>
<sequence>MSRKAREPILLPQGVEVSIQDDKIIVKGPKGSLTQKSVKEVEITLKDNSIFVHAAPHVVDRPSCMQGLYWALISNMVQGVHLGFEKRLEMIGVGFRASVQGAFLDLSIGVSHPTKIPIPSTLQVSVEKNTLISVKGLDKQLVGEFAASIRAKRPPEPYKGKGIRYENEYVRRKAGKAAKTGKK</sequence>
<organism>
    <name type="scientific">Chlamydia pneumoniae</name>
    <name type="common">Chlamydophila pneumoniae</name>
    <dbReference type="NCBI Taxonomy" id="83558"/>
    <lineage>
        <taxon>Bacteria</taxon>
        <taxon>Pseudomonadati</taxon>
        <taxon>Chlamydiota</taxon>
        <taxon>Chlamydiia</taxon>
        <taxon>Chlamydiales</taxon>
        <taxon>Chlamydiaceae</taxon>
        <taxon>Chlamydia/Chlamydophila group</taxon>
        <taxon>Chlamydia</taxon>
    </lineage>
</organism>
<keyword id="KW-0687">Ribonucleoprotein</keyword>
<keyword id="KW-0689">Ribosomal protein</keyword>
<keyword id="KW-0694">RNA-binding</keyword>
<keyword id="KW-0699">rRNA-binding</keyword>